<evidence type="ECO:0000255" key="1">
    <source>
        <dbReference type="HAMAP-Rule" id="MF_00385"/>
    </source>
</evidence>
<evidence type="ECO:0000305" key="2"/>
<reference key="1">
    <citation type="journal article" date="2003" name="Nat. Genet.">
        <title>Comparative analysis of the genome sequences of Bordetella pertussis, Bordetella parapertussis and Bordetella bronchiseptica.</title>
        <authorList>
            <person name="Parkhill J."/>
            <person name="Sebaihia M."/>
            <person name="Preston A."/>
            <person name="Murphy L.D."/>
            <person name="Thomson N.R."/>
            <person name="Harris D.E."/>
            <person name="Holden M.T.G."/>
            <person name="Churcher C.M."/>
            <person name="Bentley S.D."/>
            <person name="Mungall K.L."/>
            <person name="Cerdeno-Tarraga A.-M."/>
            <person name="Temple L."/>
            <person name="James K.D."/>
            <person name="Harris B."/>
            <person name="Quail M.A."/>
            <person name="Achtman M."/>
            <person name="Atkin R."/>
            <person name="Baker S."/>
            <person name="Basham D."/>
            <person name="Bason N."/>
            <person name="Cherevach I."/>
            <person name="Chillingworth T."/>
            <person name="Collins M."/>
            <person name="Cronin A."/>
            <person name="Davis P."/>
            <person name="Doggett J."/>
            <person name="Feltwell T."/>
            <person name="Goble A."/>
            <person name="Hamlin N."/>
            <person name="Hauser H."/>
            <person name="Holroyd S."/>
            <person name="Jagels K."/>
            <person name="Leather S."/>
            <person name="Moule S."/>
            <person name="Norberczak H."/>
            <person name="O'Neil S."/>
            <person name="Ormond D."/>
            <person name="Price C."/>
            <person name="Rabbinowitsch E."/>
            <person name="Rutter S."/>
            <person name="Sanders M."/>
            <person name="Saunders D."/>
            <person name="Seeger K."/>
            <person name="Sharp S."/>
            <person name="Simmonds M."/>
            <person name="Skelton J."/>
            <person name="Squares R."/>
            <person name="Squares S."/>
            <person name="Stevens K."/>
            <person name="Unwin L."/>
            <person name="Whitehead S."/>
            <person name="Barrell B.G."/>
            <person name="Maskell D.J."/>
        </authorList>
    </citation>
    <scope>NUCLEOTIDE SEQUENCE [LARGE SCALE GENOMIC DNA]</scope>
    <source>
        <strain>Tohama I / ATCC BAA-589 / NCTC 13251</strain>
    </source>
</reference>
<keyword id="KW-1185">Reference proteome</keyword>
<keyword id="KW-0687">Ribonucleoprotein</keyword>
<keyword id="KW-0689">Ribosomal protein</keyword>
<feature type="chain" id="PRO_0000167159" description="Small ribosomal subunit protein bS16">
    <location>
        <begin position="1"/>
        <end position="86"/>
    </location>
</feature>
<protein>
    <recommendedName>
        <fullName evidence="1">Small ribosomal subunit protein bS16</fullName>
    </recommendedName>
    <alternativeName>
        <fullName evidence="2">30S ribosomal protein S16</fullName>
    </alternativeName>
</protein>
<name>RS16_BORPE</name>
<gene>
    <name evidence="1" type="primary">rpsP</name>
    <name type="ordered locus">BP1839</name>
</gene>
<dbReference type="EMBL" id="BX640416">
    <property type="protein sequence ID" value="CAE42125.1"/>
    <property type="molecule type" value="Genomic_DNA"/>
</dbReference>
<dbReference type="RefSeq" id="NP_880541.1">
    <property type="nucleotide sequence ID" value="NC_002929.2"/>
</dbReference>
<dbReference type="RefSeq" id="WP_010926757.1">
    <property type="nucleotide sequence ID" value="NZ_CP039022.1"/>
</dbReference>
<dbReference type="SMR" id="Q7VXD8"/>
<dbReference type="STRING" id="257313.BP1839"/>
<dbReference type="PaxDb" id="257313-BP1839"/>
<dbReference type="GeneID" id="69601988"/>
<dbReference type="KEGG" id="bpe:BP1839"/>
<dbReference type="PATRIC" id="fig|257313.5.peg.1976"/>
<dbReference type="eggNOG" id="COG0228">
    <property type="taxonomic scope" value="Bacteria"/>
</dbReference>
<dbReference type="HOGENOM" id="CLU_100590_5_1_4"/>
<dbReference type="Proteomes" id="UP000002676">
    <property type="component" value="Chromosome"/>
</dbReference>
<dbReference type="GO" id="GO:0005737">
    <property type="term" value="C:cytoplasm"/>
    <property type="evidence" value="ECO:0007669"/>
    <property type="project" value="UniProtKB-ARBA"/>
</dbReference>
<dbReference type="GO" id="GO:0015935">
    <property type="term" value="C:small ribosomal subunit"/>
    <property type="evidence" value="ECO:0007669"/>
    <property type="project" value="TreeGrafter"/>
</dbReference>
<dbReference type="GO" id="GO:0003735">
    <property type="term" value="F:structural constituent of ribosome"/>
    <property type="evidence" value="ECO:0007669"/>
    <property type="project" value="InterPro"/>
</dbReference>
<dbReference type="GO" id="GO:0006412">
    <property type="term" value="P:translation"/>
    <property type="evidence" value="ECO:0007669"/>
    <property type="project" value="UniProtKB-UniRule"/>
</dbReference>
<dbReference type="Gene3D" id="3.30.1320.10">
    <property type="match status" value="1"/>
</dbReference>
<dbReference type="HAMAP" id="MF_00385">
    <property type="entry name" value="Ribosomal_bS16"/>
    <property type="match status" value="1"/>
</dbReference>
<dbReference type="InterPro" id="IPR000307">
    <property type="entry name" value="Ribosomal_bS16"/>
</dbReference>
<dbReference type="InterPro" id="IPR023803">
    <property type="entry name" value="Ribosomal_bS16_dom_sf"/>
</dbReference>
<dbReference type="NCBIfam" id="TIGR00002">
    <property type="entry name" value="S16"/>
    <property type="match status" value="1"/>
</dbReference>
<dbReference type="PANTHER" id="PTHR12919">
    <property type="entry name" value="30S RIBOSOMAL PROTEIN S16"/>
    <property type="match status" value="1"/>
</dbReference>
<dbReference type="PANTHER" id="PTHR12919:SF20">
    <property type="entry name" value="SMALL RIBOSOMAL SUBUNIT PROTEIN BS16M"/>
    <property type="match status" value="1"/>
</dbReference>
<dbReference type="Pfam" id="PF00886">
    <property type="entry name" value="Ribosomal_S16"/>
    <property type="match status" value="1"/>
</dbReference>
<dbReference type="SUPFAM" id="SSF54565">
    <property type="entry name" value="Ribosomal protein S16"/>
    <property type="match status" value="1"/>
</dbReference>
<sequence>MLVIRLARGGSKKRPFYNLVATDSRNRRDGRFVERVGFYNPVAAEGTENLRIALDRVQYWTGNGALLSPAVERLVKEYSAKVSAAA</sequence>
<comment type="similarity">
    <text evidence="1">Belongs to the bacterial ribosomal protein bS16 family.</text>
</comment>
<organism>
    <name type="scientific">Bordetella pertussis (strain Tohama I / ATCC BAA-589 / NCTC 13251)</name>
    <dbReference type="NCBI Taxonomy" id="257313"/>
    <lineage>
        <taxon>Bacteria</taxon>
        <taxon>Pseudomonadati</taxon>
        <taxon>Pseudomonadota</taxon>
        <taxon>Betaproteobacteria</taxon>
        <taxon>Burkholderiales</taxon>
        <taxon>Alcaligenaceae</taxon>
        <taxon>Bordetella</taxon>
    </lineage>
</organism>
<accession>Q7VXD8</accession>
<proteinExistence type="inferred from homology"/>